<dbReference type="EC" id="4.1.2.40" evidence="1"/>
<dbReference type="EMBL" id="CP000802">
    <property type="protein sequence ID" value="ABV07557.1"/>
    <property type="molecule type" value="Genomic_DNA"/>
</dbReference>
<dbReference type="RefSeq" id="WP_000022766.1">
    <property type="nucleotide sequence ID" value="NC_009800.1"/>
</dbReference>
<dbReference type="SMR" id="A8A4V3"/>
<dbReference type="GeneID" id="75203745"/>
<dbReference type="KEGG" id="ecx:EcHS_A3329"/>
<dbReference type="HOGENOM" id="CLU_040088_0_1_6"/>
<dbReference type="UniPathway" id="UPA00704">
    <property type="reaction ID" value="UER00716"/>
</dbReference>
<dbReference type="GO" id="GO:0005829">
    <property type="term" value="C:cytosol"/>
    <property type="evidence" value="ECO:0007669"/>
    <property type="project" value="TreeGrafter"/>
</dbReference>
<dbReference type="GO" id="GO:0009025">
    <property type="term" value="F:tagatose-bisphosphate aldolase activity"/>
    <property type="evidence" value="ECO:0007669"/>
    <property type="project" value="UniProtKB-UniRule"/>
</dbReference>
<dbReference type="GO" id="GO:0008270">
    <property type="term" value="F:zinc ion binding"/>
    <property type="evidence" value="ECO:0007669"/>
    <property type="project" value="UniProtKB-UniRule"/>
</dbReference>
<dbReference type="GO" id="GO:0005975">
    <property type="term" value="P:carbohydrate metabolic process"/>
    <property type="evidence" value="ECO:0007669"/>
    <property type="project" value="InterPro"/>
</dbReference>
<dbReference type="GO" id="GO:2001059">
    <property type="term" value="P:D-tagatose 6-phosphate catabolic process"/>
    <property type="evidence" value="ECO:0007669"/>
    <property type="project" value="UniProtKB-UniRule"/>
</dbReference>
<dbReference type="CDD" id="cd00453">
    <property type="entry name" value="FTBP_aldolase_II"/>
    <property type="match status" value="1"/>
</dbReference>
<dbReference type="FunFam" id="3.20.20.70:FF:000043">
    <property type="entry name" value="D-tagatose-1,6-bisphosphate aldolase subunit GatY"/>
    <property type="match status" value="1"/>
</dbReference>
<dbReference type="Gene3D" id="3.20.20.70">
    <property type="entry name" value="Aldolase class I"/>
    <property type="match status" value="1"/>
</dbReference>
<dbReference type="HAMAP" id="MF_01293">
    <property type="entry name" value="TagBP_aldolase_KbaY"/>
    <property type="match status" value="1"/>
</dbReference>
<dbReference type="InterPro" id="IPR013785">
    <property type="entry name" value="Aldolase_TIM"/>
</dbReference>
<dbReference type="InterPro" id="IPR050246">
    <property type="entry name" value="Class_II_FBP_aldolase"/>
</dbReference>
<dbReference type="InterPro" id="IPR000771">
    <property type="entry name" value="FBA_II"/>
</dbReference>
<dbReference type="InterPro" id="IPR023788">
    <property type="entry name" value="TagBP_ald_KbaY"/>
</dbReference>
<dbReference type="InterPro" id="IPR011288">
    <property type="entry name" value="TagBP_ald_KbaY/GatY"/>
</dbReference>
<dbReference type="NCBIfam" id="TIGR00167">
    <property type="entry name" value="cbbA"/>
    <property type="match status" value="1"/>
</dbReference>
<dbReference type="NCBIfam" id="NF006626">
    <property type="entry name" value="PRK09195.1"/>
    <property type="match status" value="1"/>
</dbReference>
<dbReference type="NCBIfam" id="NF009374">
    <property type="entry name" value="PRK12737.1"/>
    <property type="match status" value="1"/>
</dbReference>
<dbReference type="NCBIfam" id="NF009375">
    <property type="entry name" value="PRK12738.1"/>
    <property type="match status" value="1"/>
</dbReference>
<dbReference type="NCBIfam" id="TIGR01858">
    <property type="entry name" value="tag_bisphos_ald"/>
    <property type="match status" value="1"/>
</dbReference>
<dbReference type="PANTHER" id="PTHR30304">
    <property type="entry name" value="D-TAGATOSE-1,6-BISPHOSPHATE ALDOLASE"/>
    <property type="match status" value="1"/>
</dbReference>
<dbReference type="PANTHER" id="PTHR30304:SF0">
    <property type="entry name" value="D-TAGATOSE-1,6-BISPHOSPHATE ALDOLASE SUBUNIT GATY-RELATED"/>
    <property type="match status" value="1"/>
</dbReference>
<dbReference type="Pfam" id="PF01116">
    <property type="entry name" value="F_bP_aldolase"/>
    <property type="match status" value="1"/>
</dbReference>
<dbReference type="PIRSF" id="PIRSF001359">
    <property type="entry name" value="F_bP_aldolase_II"/>
    <property type="match status" value="1"/>
</dbReference>
<dbReference type="SUPFAM" id="SSF51569">
    <property type="entry name" value="Aldolase"/>
    <property type="match status" value="1"/>
</dbReference>
<dbReference type="PROSITE" id="PS00602">
    <property type="entry name" value="ALDOLASE_CLASS_II_1"/>
    <property type="match status" value="1"/>
</dbReference>
<dbReference type="PROSITE" id="PS00806">
    <property type="entry name" value="ALDOLASE_CLASS_II_2"/>
    <property type="match status" value="1"/>
</dbReference>
<sequence>MSIISTKYLLQDAQANGYAVPAFNIHNAETIQAILEVCSEMRSPVILAGTPGTFKHIALEEIYALCSAYSTTYNMPLALHLDHHESLDDIRRKVHAGVRSAMIDGSHFPFAENVKLVKSVVDFCHSQDCSVEAELGRLGGVEDDMSVDAESAFLTDPQEAKRFVELTGVDSLAVAIGTAHGLYSKTPKIDFQRLAEIREVVDVPLVLHGASDVPDEFVRRTIELGVTKVNVATELKIAFAGAVKAWFAENPQGNDPRYYMRVGMDAMKEVVRNKINVCGSANRISA</sequence>
<proteinExistence type="inferred from homology"/>
<feature type="chain" id="PRO_0000355328" description="D-tagatose-1,6-bisphosphate aldolase subunit KbaY">
    <location>
        <begin position="1"/>
        <end position="286"/>
    </location>
</feature>
<feature type="active site" description="Proton donor" evidence="1">
    <location>
        <position position="82"/>
    </location>
</feature>
<feature type="binding site" evidence="1">
    <location>
        <position position="83"/>
    </location>
    <ligand>
        <name>Zn(2+)</name>
        <dbReference type="ChEBI" id="CHEBI:29105"/>
        <note>catalytic</note>
    </ligand>
</feature>
<feature type="binding site" evidence="1">
    <location>
        <position position="180"/>
    </location>
    <ligand>
        <name>Zn(2+)</name>
        <dbReference type="ChEBI" id="CHEBI:29105"/>
        <note>catalytic</note>
    </ligand>
</feature>
<feature type="binding site" evidence="1">
    <location>
        <position position="181"/>
    </location>
    <ligand>
        <name>dihydroxyacetone phosphate</name>
        <dbReference type="ChEBI" id="CHEBI:57642"/>
    </ligand>
</feature>
<feature type="binding site" evidence="1">
    <location>
        <position position="208"/>
    </location>
    <ligand>
        <name>Zn(2+)</name>
        <dbReference type="ChEBI" id="CHEBI:29105"/>
        <note>catalytic</note>
    </ligand>
</feature>
<feature type="binding site" evidence="1">
    <location>
        <begin position="209"/>
        <end position="211"/>
    </location>
    <ligand>
        <name>dihydroxyacetone phosphate</name>
        <dbReference type="ChEBI" id="CHEBI:57642"/>
    </ligand>
</feature>
<feature type="binding site" evidence="1">
    <location>
        <begin position="230"/>
        <end position="233"/>
    </location>
    <ligand>
        <name>dihydroxyacetone phosphate</name>
        <dbReference type="ChEBI" id="CHEBI:57642"/>
    </ligand>
</feature>
<evidence type="ECO:0000255" key="1">
    <source>
        <dbReference type="HAMAP-Rule" id="MF_01293"/>
    </source>
</evidence>
<keyword id="KW-0456">Lyase</keyword>
<keyword id="KW-0479">Metal-binding</keyword>
<keyword id="KW-0862">Zinc</keyword>
<protein>
    <recommendedName>
        <fullName evidence="1">D-tagatose-1,6-bisphosphate aldolase subunit KbaY</fullName>
        <shortName evidence="1">TBPA</shortName>
        <shortName evidence="1">TagBP aldolase</shortName>
        <ecNumber evidence="1">4.1.2.40</ecNumber>
    </recommendedName>
    <alternativeName>
        <fullName evidence="1">D-tagatose-bisphosphate aldolase class II</fullName>
    </alternativeName>
    <alternativeName>
        <fullName evidence="1">Ketose 1,6-bisphosphate aldolase class II</fullName>
    </alternativeName>
    <alternativeName>
        <fullName evidence="1">Tagatose-bisphosphate aldolase</fullName>
    </alternativeName>
</protein>
<gene>
    <name evidence="1" type="primary">kbaY</name>
    <name type="ordered locus">EcHS_A3329</name>
</gene>
<organism>
    <name type="scientific">Escherichia coli O9:H4 (strain HS)</name>
    <dbReference type="NCBI Taxonomy" id="331112"/>
    <lineage>
        <taxon>Bacteria</taxon>
        <taxon>Pseudomonadati</taxon>
        <taxon>Pseudomonadota</taxon>
        <taxon>Gammaproteobacteria</taxon>
        <taxon>Enterobacterales</taxon>
        <taxon>Enterobacteriaceae</taxon>
        <taxon>Escherichia</taxon>
    </lineage>
</organism>
<comment type="function">
    <text evidence="1">Catalytic subunit of the tagatose-1,6-bisphosphate aldolase KbaYZ, which catalyzes the reversible aldol condensation of dihydroxyacetone phosphate (DHAP or glycerone-phosphate) with glyceraldehyde 3-phosphate (G3P) to produce tagatose 1,6-bisphosphate (TBP). Requires KbaZ subunit for full activity and stability.</text>
</comment>
<comment type="catalytic activity">
    <reaction evidence="1">
        <text>D-tagatofuranose 1,6-bisphosphate = D-glyceraldehyde 3-phosphate + dihydroxyacetone phosphate</text>
        <dbReference type="Rhea" id="RHEA:22948"/>
        <dbReference type="ChEBI" id="CHEBI:57642"/>
        <dbReference type="ChEBI" id="CHEBI:58694"/>
        <dbReference type="ChEBI" id="CHEBI:59776"/>
        <dbReference type="EC" id="4.1.2.40"/>
    </reaction>
</comment>
<comment type="cofactor">
    <cofactor evidence="1">
        <name>Zn(2+)</name>
        <dbReference type="ChEBI" id="CHEBI:29105"/>
    </cofactor>
    <text evidence="1">Binds 1 zinc ion per subunit.</text>
</comment>
<comment type="pathway">
    <text evidence="1">Carbohydrate metabolism; D-tagatose 6-phosphate degradation; D-glyceraldehyde 3-phosphate and glycerone phosphate from D-tagatose 6-phosphate: step 2/2.</text>
</comment>
<comment type="subunit">
    <text evidence="1">Homotetramer. Forms a complex with KbaZ.</text>
</comment>
<comment type="similarity">
    <text evidence="1">Belongs to the class II fructose-bisphosphate aldolase family. TagBP aldolase KbaY subfamily.</text>
</comment>
<accession>A8A4V3</accession>
<name>KBAY_ECOHS</name>
<reference key="1">
    <citation type="journal article" date="2008" name="J. Bacteriol.">
        <title>The pangenome structure of Escherichia coli: comparative genomic analysis of E. coli commensal and pathogenic isolates.</title>
        <authorList>
            <person name="Rasko D.A."/>
            <person name="Rosovitz M.J."/>
            <person name="Myers G.S.A."/>
            <person name="Mongodin E.F."/>
            <person name="Fricke W.F."/>
            <person name="Gajer P."/>
            <person name="Crabtree J."/>
            <person name="Sebaihia M."/>
            <person name="Thomson N.R."/>
            <person name="Chaudhuri R."/>
            <person name="Henderson I.R."/>
            <person name="Sperandio V."/>
            <person name="Ravel J."/>
        </authorList>
    </citation>
    <scope>NUCLEOTIDE SEQUENCE [LARGE SCALE GENOMIC DNA]</scope>
    <source>
        <strain>HS</strain>
    </source>
</reference>